<accession>A8AQV7</accession>
<keyword id="KW-0067">ATP-binding</keyword>
<keyword id="KW-0963">Cytoplasm</keyword>
<keyword id="KW-0210">Decarboxylase</keyword>
<keyword id="KW-0312">Gluconeogenesis</keyword>
<keyword id="KW-0456">Lyase</keyword>
<keyword id="KW-0464">Manganese</keyword>
<keyword id="KW-0479">Metal-binding</keyword>
<keyword id="KW-0547">Nucleotide-binding</keyword>
<keyword id="KW-1185">Reference proteome</keyword>
<evidence type="ECO:0000255" key="1">
    <source>
        <dbReference type="HAMAP-Rule" id="MF_00453"/>
    </source>
</evidence>
<protein>
    <recommendedName>
        <fullName evidence="1">Phosphoenolpyruvate carboxykinase (ATP)</fullName>
        <shortName evidence="1">PCK</shortName>
        <shortName evidence="1">PEP carboxykinase</shortName>
        <shortName evidence="1">PEPCK</shortName>
        <ecNumber evidence="1">4.1.1.49</ecNumber>
    </recommendedName>
</protein>
<feature type="chain" id="PRO_1000026321" description="Phosphoenolpyruvate carboxykinase (ATP)">
    <location>
        <begin position="1"/>
        <end position="539"/>
    </location>
</feature>
<feature type="binding site" evidence="1">
    <location>
        <position position="64"/>
    </location>
    <ligand>
        <name>substrate</name>
    </ligand>
</feature>
<feature type="binding site" evidence="1">
    <location>
        <position position="206"/>
    </location>
    <ligand>
        <name>substrate</name>
    </ligand>
</feature>
<feature type="binding site" evidence="1">
    <location>
        <position position="212"/>
    </location>
    <ligand>
        <name>ATP</name>
        <dbReference type="ChEBI" id="CHEBI:30616"/>
    </ligand>
</feature>
<feature type="binding site" evidence="1">
    <location>
        <position position="212"/>
    </location>
    <ligand>
        <name>Mn(2+)</name>
        <dbReference type="ChEBI" id="CHEBI:29035"/>
    </ligand>
</feature>
<feature type="binding site" evidence="1">
    <location>
        <position position="212"/>
    </location>
    <ligand>
        <name>substrate</name>
    </ligand>
</feature>
<feature type="binding site" evidence="1">
    <location>
        <position position="231"/>
    </location>
    <ligand>
        <name>ATP</name>
        <dbReference type="ChEBI" id="CHEBI:30616"/>
    </ligand>
</feature>
<feature type="binding site" evidence="1">
    <location>
        <position position="231"/>
    </location>
    <ligand>
        <name>Mn(2+)</name>
        <dbReference type="ChEBI" id="CHEBI:29035"/>
    </ligand>
</feature>
<feature type="binding site" evidence="1">
    <location>
        <begin position="247"/>
        <end position="255"/>
    </location>
    <ligand>
        <name>ATP</name>
        <dbReference type="ChEBI" id="CHEBI:30616"/>
    </ligand>
</feature>
<feature type="binding site" evidence="1">
    <location>
        <position position="268"/>
    </location>
    <ligand>
        <name>Mn(2+)</name>
        <dbReference type="ChEBI" id="CHEBI:29035"/>
    </ligand>
</feature>
<feature type="binding site" evidence="1">
    <location>
        <position position="296"/>
    </location>
    <ligand>
        <name>ATP</name>
        <dbReference type="ChEBI" id="CHEBI:30616"/>
    </ligand>
</feature>
<feature type="binding site" evidence="1">
    <location>
        <position position="332"/>
    </location>
    <ligand>
        <name>ATP</name>
        <dbReference type="ChEBI" id="CHEBI:30616"/>
    </ligand>
</feature>
<feature type="binding site" evidence="1">
    <location>
        <position position="332"/>
    </location>
    <ligand>
        <name>substrate</name>
    </ligand>
</feature>
<feature type="binding site" evidence="1">
    <location>
        <begin position="448"/>
        <end position="449"/>
    </location>
    <ligand>
        <name>ATP</name>
        <dbReference type="ChEBI" id="CHEBI:30616"/>
    </ligand>
</feature>
<feature type="binding site" evidence="1">
    <location>
        <position position="454"/>
    </location>
    <ligand>
        <name>ATP</name>
        <dbReference type="ChEBI" id="CHEBI:30616"/>
    </ligand>
</feature>
<comment type="function">
    <text evidence="1">Involved in the gluconeogenesis. Catalyzes the conversion of oxaloacetate (OAA) to phosphoenolpyruvate (PEP) through direct phosphoryl transfer between the nucleoside triphosphate and OAA.</text>
</comment>
<comment type="catalytic activity">
    <reaction evidence="1">
        <text>oxaloacetate + ATP = phosphoenolpyruvate + ADP + CO2</text>
        <dbReference type="Rhea" id="RHEA:18617"/>
        <dbReference type="ChEBI" id="CHEBI:16452"/>
        <dbReference type="ChEBI" id="CHEBI:16526"/>
        <dbReference type="ChEBI" id="CHEBI:30616"/>
        <dbReference type="ChEBI" id="CHEBI:58702"/>
        <dbReference type="ChEBI" id="CHEBI:456216"/>
        <dbReference type="EC" id="4.1.1.49"/>
    </reaction>
</comment>
<comment type="cofactor">
    <cofactor evidence="1">
        <name>Mn(2+)</name>
        <dbReference type="ChEBI" id="CHEBI:29035"/>
    </cofactor>
    <text evidence="1">Binds 1 Mn(2+) ion per subunit.</text>
</comment>
<comment type="pathway">
    <text evidence="1">Carbohydrate biosynthesis; gluconeogenesis.</text>
</comment>
<comment type="subunit">
    <text evidence="1">Monomer.</text>
</comment>
<comment type="subcellular location">
    <subcellularLocation>
        <location evidence="1">Cytoplasm</location>
    </subcellularLocation>
</comment>
<comment type="similarity">
    <text evidence="1">Belongs to the phosphoenolpyruvate carboxykinase (ATP) family.</text>
</comment>
<name>PCKA_CITK8</name>
<gene>
    <name evidence="1" type="primary">pckA</name>
    <name type="ordered locus">CKO_04825</name>
</gene>
<organism>
    <name type="scientific">Citrobacter koseri (strain ATCC BAA-895 / CDC 4225-83 / SGSC4696)</name>
    <dbReference type="NCBI Taxonomy" id="290338"/>
    <lineage>
        <taxon>Bacteria</taxon>
        <taxon>Pseudomonadati</taxon>
        <taxon>Pseudomonadota</taxon>
        <taxon>Gammaproteobacteria</taxon>
        <taxon>Enterobacterales</taxon>
        <taxon>Enterobacteriaceae</taxon>
        <taxon>Citrobacter</taxon>
    </lineage>
</organism>
<reference key="1">
    <citation type="submission" date="2007-08" db="EMBL/GenBank/DDBJ databases">
        <authorList>
            <consortium name="The Citrobacter koseri Genome Sequencing Project"/>
            <person name="McClelland M."/>
            <person name="Sanderson E.K."/>
            <person name="Porwollik S."/>
            <person name="Spieth J."/>
            <person name="Clifton W.S."/>
            <person name="Latreille P."/>
            <person name="Courtney L."/>
            <person name="Wang C."/>
            <person name="Pepin K."/>
            <person name="Bhonagiri V."/>
            <person name="Nash W."/>
            <person name="Johnson M."/>
            <person name="Thiruvilangam P."/>
            <person name="Wilson R."/>
        </authorList>
    </citation>
    <scope>NUCLEOTIDE SEQUENCE [LARGE SCALE GENOMIC DNA]</scope>
    <source>
        <strain>ATCC BAA-895 / CDC 4225-83 / SGSC4696</strain>
    </source>
</reference>
<sequence length="539" mass="59671">MRVNSLTPQDLKAYGINDVQDIVYNPSYDLLYQEELDPTLEGYERGVLTNLGAVAVDTGIFTGRSPKDKYIVRDDTTRDTLWWSDKGKGKNDNKPLSQETWQHLKGLVTQQLSGKRLFIVDAFCGANADTRLSVRFITEVAWQAHFVKNMFIRPADEELVDFKPDFIVMNGAKCTNPQWKEQGLNSENFVAFNLTERIQLIGGTWYGGEMKKGMFSVMNYLLPLKGIASMHCSANVGEKGDVAVFFGLSGTGKTTLSTDPKRRLIGDDEHGWDDDGVFNFEGGCYAKTIKLSKEAEPEIYNAIRRDALLENVTVREDGSIDFDDGSKTENTRVSYPIYHIDNIVKPVSKAGHATKVIFLTADAFGVLPPVSRLTADQTQYHFLSGFTAKLAGTERGVTEPTPTFSACFGAAFLSLHPTQYAEVLVKRMQASGAQAYLVNTGWNGTGKRISIKDTRAIIDAILNGSLDNAETFNLPMFDLAIPTELPGVETRILDPRNTYASPEQWQEKATALAKLFVENFEKYTDTPAGEALVSAGPKL</sequence>
<proteinExistence type="inferred from homology"/>
<dbReference type="EC" id="4.1.1.49" evidence="1"/>
<dbReference type="EMBL" id="CP000822">
    <property type="protein sequence ID" value="ABV15870.1"/>
    <property type="molecule type" value="Genomic_DNA"/>
</dbReference>
<dbReference type="RefSeq" id="WP_012135511.1">
    <property type="nucleotide sequence ID" value="NC_009792.1"/>
</dbReference>
<dbReference type="SMR" id="A8AQV7"/>
<dbReference type="STRING" id="290338.CKO_04825"/>
<dbReference type="GeneID" id="45138325"/>
<dbReference type="KEGG" id="cko:CKO_04825"/>
<dbReference type="HOGENOM" id="CLU_018247_0_1_6"/>
<dbReference type="OrthoDB" id="9806325at2"/>
<dbReference type="UniPathway" id="UPA00138"/>
<dbReference type="Proteomes" id="UP000008148">
    <property type="component" value="Chromosome"/>
</dbReference>
<dbReference type="GO" id="GO:0005829">
    <property type="term" value="C:cytosol"/>
    <property type="evidence" value="ECO:0007669"/>
    <property type="project" value="TreeGrafter"/>
</dbReference>
<dbReference type="GO" id="GO:0005524">
    <property type="term" value="F:ATP binding"/>
    <property type="evidence" value="ECO:0007669"/>
    <property type="project" value="UniProtKB-UniRule"/>
</dbReference>
<dbReference type="GO" id="GO:0046872">
    <property type="term" value="F:metal ion binding"/>
    <property type="evidence" value="ECO:0007669"/>
    <property type="project" value="UniProtKB-KW"/>
</dbReference>
<dbReference type="GO" id="GO:0004612">
    <property type="term" value="F:phosphoenolpyruvate carboxykinase (ATP) activity"/>
    <property type="evidence" value="ECO:0007669"/>
    <property type="project" value="UniProtKB-UniRule"/>
</dbReference>
<dbReference type="GO" id="GO:0006094">
    <property type="term" value="P:gluconeogenesis"/>
    <property type="evidence" value="ECO:0007669"/>
    <property type="project" value="UniProtKB-UniRule"/>
</dbReference>
<dbReference type="CDD" id="cd00484">
    <property type="entry name" value="PEPCK_ATP"/>
    <property type="match status" value="1"/>
</dbReference>
<dbReference type="FunFam" id="2.170.8.10:FF:000001">
    <property type="entry name" value="Phosphoenolpyruvate carboxykinase (ATP)"/>
    <property type="match status" value="1"/>
</dbReference>
<dbReference type="FunFam" id="3.40.449.10:FF:000001">
    <property type="entry name" value="Phosphoenolpyruvate carboxykinase (ATP)"/>
    <property type="match status" value="1"/>
</dbReference>
<dbReference type="Gene3D" id="3.90.228.20">
    <property type="match status" value="1"/>
</dbReference>
<dbReference type="Gene3D" id="3.40.449.10">
    <property type="entry name" value="Phosphoenolpyruvate Carboxykinase, domain 1"/>
    <property type="match status" value="1"/>
</dbReference>
<dbReference type="Gene3D" id="2.170.8.10">
    <property type="entry name" value="Phosphoenolpyruvate Carboxykinase, domain 2"/>
    <property type="match status" value="1"/>
</dbReference>
<dbReference type="HAMAP" id="MF_00453">
    <property type="entry name" value="PEPCK_ATP"/>
    <property type="match status" value="1"/>
</dbReference>
<dbReference type="InterPro" id="IPR001272">
    <property type="entry name" value="PEP_carboxykinase_ATP"/>
</dbReference>
<dbReference type="InterPro" id="IPR013035">
    <property type="entry name" value="PEP_carboxykinase_C"/>
</dbReference>
<dbReference type="InterPro" id="IPR008210">
    <property type="entry name" value="PEP_carboxykinase_N"/>
</dbReference>
<dbReference type="InterPro" id="IPR015994">
    <property type="entry name" value="PEPCK_ATP_CS"/>
</dbReference>
<dbReference type="NCBIfam" id="TIGR00224">
    <property type="entry name" value="pckA"/>
    <property type="match status" value="1"/>
</dbReference>
<dbReference type="NCBIfam" id="NF006819">
    <property type="entry name" value="PRK09344.1-1"/>
    <property type="match status" value="1"/>
</dbReference>
<dbReference type="NCBIfam" id="NF006820">
    <property type="entry name" value="PRK09344.1-2"/>
    <property type="match status" value="1"/>
</dbReference>
<dbReference type="NCBIfam" id="NF006821">
    <property type="entry name" value="PRK09344.1-3"/>
    <property type="match status" value="1"/>
</dbReference>
<dbReference type="PANTHER" id="PTHR30031:SF0">
    <property type="entry name" value="PHOSPHOENOLPYRUVATE CARBOXYKINASE (ATP)"/>
    <property type="match status" value="1"/>
</dbReference>
<dbReference type="PANTHER" id="PTHR30031">
    <property type="entry name" value="PHOSPHOENOLPYRUVATE CARBOXYKINASE ATP"/>
    <property type="match status" value="1"/>
</dbReference>
<dbReference type="Pfam" id="PF01293">
    <property type="entry name" value="PEPCK_ATP"/>
    <property type="match status" value="1"/>
</dbReference>
<dbReference type="PIRSF" id="PIRSF006294">
    <property type="entry name" value="PEP_crbxkin"/>
    <property type="match status" value="1"/>
</dbReference>
<dbReference type="SUPFAM" id="SSF68923">
    <property type="entry name" value="PEP carboxykinase N-terminal domain"/>
    <property type="match status" value="1"/>
</dbReference>
<dbReference type="SUPFAM" id="SSF53795">
    <property type="entry name" value="PEP carboxykinase-like"/>
    <property type="match status" value="1"/>
</dbReference>
<dbReference type="PROSITE" id="PS00532">
    <property type="entry name" value="PEPCK_ATP"/>
    <property type="match status" value="1"/>
</dbReference>